<sequence>MNIELLQQLCEASAVSGDEQEVRDILINTLEPCVNEITFDGLGSFVARKGNKGPKVAVVGHMDEVGFMVTHIDESGFLRFTTIGGWWNQSMLNHRVTIRTHKGVKIPGVIGSVAPHALTEKQKQQPLSFDEMFIDIGANSREEVEKRGVEIGNFISPEANFACWGEDKVVGKALDNRIGCAMMAELLQTVNNPEITLYGVGSVEEEVGLRGAQTSAEHIKPDVVIVLDTAVAGDVPGIDNIKYPLKLGQGPGLMLFDKRYFPNQKLVAALKSCAAHNDLPLQFSTMKTGATDGGRYNVMGGGRPVVALCLPTRYLHANSGMISKADYEALLTLIRGFLTTLTAEKVNAFSQFRQVD</sequence>
<accession>P32153</accession>
<accession>Q2M8J5</accession>
<dbReference type="EC" id="3.4.11.-"/>
<dbReference type="EMBL" id="L19201">
    <property type="protein sequence ID" value="AAB03031.1"/>
    <property type="molecule type" value="Genomic_DNA"/>
</dbReference>
<dbReference type="EMBL" id="U00096">
    <property type="protein sequence ID" value="AAC76880.1"/>
    <property type="molecule type" value="Genomic_DNA"/>
</dbReference>
<dbReference type="EMBL" id="AP009048">
    <property type="protein sequence ID" value="BAE77411.1"/>
    <property type="molecule type" value="Genomic_DNA"/>
</dbReference>
<dbReference type="PIR" id="S40842">
    <property type="entry name" value="S40842"/>
</dbReference>
<dbReference type="RefSeq" id="NP_418334.1">
    <property type="nucleotide sequence ID" value="NC_000913.3"/>
</dbReference>
<dbReference type="RefSeq" id="WP_001019484.1">
    <property type="nucleotide sequence ID" value="NZ_LN832404.1"/>
</dbReference>
<dbReference type="SMR" id="P32153"/>
<dbReference type="BioGRID" id="4263328">
    <property type="interactions" value="20"/>
</dbReference>
<dbReference type="DIP" id="DIP-9694N"/>
<dbReference type="FunCoup" id="P32153">
    <property type="interactions" value="304"/>
</dbReference>
<dbReference type="IntAct" id="P32153">
    <property type="interactions" value="4"/>
</dbReference>
<dbReference type="STRING" id="511145.b3898"/>
<dbReference type="PaxDb" id="511145-b3898"/>
<dbReference type="EnsemblBacteria" id="AAC76880">
    <property type="protein sequence ID" value="AAC76880"/>
    <property type="gene ID" value="b3898"/>
</dbReference>
<dbReference type="GeneID" id="948388"/>
<dbReference type="KEGG" id="ecj:JW3869"/>
<dbReference type="KEGG" id="eco:b3898"/>
<dbReference type="KEGG" id="ecoc:C3026_21075"/>
<dbReference type="PATRIC" id="fig|1411691.4.peg.2809"/>
<dbReference type="EchoBASE" id="EB1808"/>
<dbReference type="eggNOG" id="COG1363">
    <property type="taxonomic scope" value="Bacteria"/>
</dbReference>
<dbReference type="HOGENOM" id="CLU_047249_0_2_6"/>
<dbReference type="InParanoid" id="P32153"/>
<dbReference type="OMA" id="MQINREG"/>
<dbReference type="OrthoDB" id="9772053at2"/>
<dbReference type="PhylomeDB" id="P32153"/>
<dbReference type="BioCyc" id="EcoCyc:EG11862-MONOMER"/>
<dbReference type="PRO" id="PR:P32153"/>
<dbReference type="Proteomes" id="UP000000625">
    <property type="component" value="Chromosome"/>
</dbReference>
<dbReference type="GO" id="GO:0046872">
    <property type="term" value="F:metal ion binding"/>
    <property type="evidence" value="ECO:0007669"/>
    <property type="project" value="UniProtKB-KW"/>
</dbReference>
<dbReference type="GO" id="GO:0070006">
    <property type="term" value="F:metalloaminopeptidase activity"/>
    <property type="evidence" value="ECO:0000318"/>
    <property type="project" value="GO_Central"/>
</dbReference>
<dbReference type="GO" id="GO:0006508">
    <property type="term" value="P:proteolysis"/>
    <property type="evidence" value="ECO:0007669"/>
    <property type="project" value="UniProtKB-KW"/>
</dbReference>
<dbReference type="CDD" id="cd05656">
    <property type="entry name" value="M42_Frv"/>
    <property type="match status" value="1"/>
</dbReference>
<dbReference type="Gene3D" id="2.40.30.40">
    <property type="entry name" value="Peptidase M42, domain 2"/>
    <property type="match status" value="1"/>
</dbReference>
<dbReference type="Gene3D" id="3.40.630.10">
    <property type="entry name" value="Zn peptidases"/>
    <property type="match status" value="1"/>
</dbReference>
<dbReference type="InterPro" id="IPR008007">
    <property type="entry name" value="Peptidase_M42"/>
</dbReference>
<dbReference type="InterPro" id="IPR051464">
    <property type="entry name" value="Peptidase_M42_aminopept"/>
</dbReference>
<dbReference type="InterPro" id="IPR023367">
    <property type="entry name" value="Peptidase_M42_dom2"/>
</dbReference>
<dbReference type="NCBIfam" id="NF007367">
    <property type="entry name" value="PRK09864.1"/>
    <property type="match status" value="1"/>
</dbReference>
<dbReference type="PANTHER" id="PTHR32481">
    <property type="entry name" value="AMINOPEPTIDASE"/>
    <property type="match status" value="1"/>
</dbReference>
<dbReference type="PANTHER" id="PTHR32481:SF0">
    <property type="entry name" value="AMINOPEPTIDASE YPDE-RELATED"/>
    <property type="match status" value="1"/>
</dbReference>
<dbReference type="Pfam" id="PF05343">
    <property type="entry name" value="Peptidase_M42"/>
    <property type="match status" value="1"/>
</dbReference>
<dbReference type="PIRSF" id="PIRSF001123">
    <property type="entry name" value="PepA_GA"/>
    <property type="match status" value="1"/>
</dbReference>
<dbReference type="SUPFAM" id="SSF101821">
    <property type="entry name" value="Aminopeptidase/glucanase lid domain"/>
    <property type="match status" value="1"/>
</dbReference>
<dbReference type="SUPFAM" id="SSF53187">
    <property type="entry name" value="Zn-dependent exopeptidases"/>
    <property type="match status" value="1"/>
</dbReference>
<feature type="chain" id="PRO_0000071655" description="Putative aminopeptidase FrvX">
    <location>
        <begin position="1"/>
        <end position="356"/>
    </location>
</feature>
<feature type="active site" description="Proton acceptor" evidence="1">
    <location>
        <position position="205"/>
    </location>
</feature>
<feature type="binding site" evidence="1">
    <location>
        <position position="61"/>
    </location>
    <ligand>
        <name>a divalent metal cation</name>
        <dbReference type="ChEBI" id="CHEBI:60240"/>
        <label>1</label>
    </ligand>
</feature>
<feature type="binding site" evidence="1">
    <location>
        <position position="175"/>
    </location>
    <ligand>
        <name>a divalent metal cation</name>
        <dbReference type="ChEBI" id="CHEBI:60240"/>
        <label>1</label>
    </ligand>
</feature>
<feature type="binding site" evidence="1">
    <location>
        <position position="175"/>
    </location>
    <ligand>
        <name>a divalent metal cation</name>
        <dbReference type="ChEBI" id="CHEBI:60240"/>
        <label>2</label>
    </ligand>
</feature>
<feature type="binding site" evidence="1">
    <location>
        <position position="206"/>
    </location>
    <ligand>
        <name>a divalent metal cation</name>
        <dbReference type="ChEBI" id="CHEBI:60240"/>
        <label>2</label>
    </ligand>
</feature>
<feature type="binding site" evidence="1">
    <location>
        <position position="228"/>
    </location>
    <ligand>
        <name>a divalent metal cation</name>
        <dbReference type="ChEBI" id="CHEBI:60240"/>
        <label>1</label>
    </ligand>
</feature>
<feature type="binding site" evidence="1">
    <location>
        <position position="316"/>
    </location>
    <ligand>
        <name>a divalent metal cation</name>
        <dbReference type="ChEBI" id="CHEBI:60240"/>
        <label>2</label>
    </ligand>
</feature>
<keyword id="KW-0031">Aminopeptidase</keyword>
<keyword id="KW-0378">Hydrolase</keyword>
<keyword id="KW-0479">Metal-binding</keyword>
<keyword id="KW-0482">Metalloprotease</keyword>
<keyword id="KW-0645">Protease</keyword>
<keyword id="KW-1185">Reference proteome</keyword>
<reference key="1">
    <citation type="journal article" date="1993" name="Nucleic Acids Res.">
        <title>Analysis of the Escherichia coli genome. III. DNA sequence of the region from 87.2 to 89.2 minutes.</title>
        <authorList>
            <person name="Plunkett G. III"/>
            <person name="Burland V."/>
            <person name="Daniels D.L."/>
            <person name="Blattner F.R."/>
        </authorList>
    </citation>
    <scope>NUCLEOTIDE SEQUENCE [LARGE SCALE GENOMIC DNA]</scope>
    <source>
        <strain>K12 / MG1655 / ATCC 47076</strain>
    </source>
</reference>
<reference key="2">
    <citation type="journal article" date="1997" name="Science">
        <title>The complete genome sequence of Escherichia coli K-12.</title>
        <authorList>
            <person name="Blattner F.R."/>
            <person name="Plunkett G. III"/>
            <person name="Bloch C.A."/>
            <person name="Perna N.T."/>
            <person name="Burland V."/>
            <person name="Riley M."/>
            <person name="Collado-Vides J."/>
            <person name="Glasner J.D."/>
            <person name="Rode C.K."/>
            <person name="Mayhew G.F."/>
            <person name="Gregor J."/>
            <person name="Davis N.W."/>
            <person name="Kirkpatrick H.A."/>
            <person name="Goeden M.A."/>
            <person name="Rose D.J."/>
            <person name="Mau B."/>
            <person name="Shao Y."/>
        </authorList>
    </citation>
    <scope>NUCLEOTIDE SEQUENCE [LARGE SCALE GENOMIC DNA]</scope>
    <source>
        <strain>K12 / MG1655 / ATCC 47076</strain>
    </source>
</reference>
<reference key="3">
    <citation type="journal article" date="2006" name="Mol. Syst. Biol.">
        <title>Highly accurate genome sequences of Escherichia coli K-12 strains MG1655 and W3110.</title>
        <authorList>
            <person name="Hayashi K."/>
            <person name="Morooka N."/>
            <person name="Yamamoto Y."/>
            <person name="Fujita K."/>
            <person name="Isono K."/>
            <person name="Choi S."/>
            <person name="Ohtsubo E."/>
            <person name="Baba T."/>
            <person name="Wanner B.L."/>
            <person name="Mori H."/>
            <person name="Horiuchi T."/>
        </authorList>
    </citation>
    <scope>NUCLEOTIDE SEQUENCE [LARGE SCALE GENOMIC DNA]</scope>
    <source>
        <strain>K12 / W3110 / ATCC 27325 / DSM 5911</strain>
    </source>
</reference>
<reference key="4">
    <citation type="journal article" date="1994" name="Protein Sci.">
        <title>Novel phosphotransferase system genes revealed by bacterial genome analysis: unique, putative fructose- and glucoside-specific systems.</title>
        <authorList>
            <person name="Reizer J."/>
            <person name="Michotey V."/>
            <person name="Reizer A."/>
            <person name="Saier M.H. Jr."/>
        </authorList>
    </citation>
    <scope>DISCUSSION OF SEQUENCE</scope>
</reference>
<evidence type="ECO:0000250" key="1"/>
<evidence type="ECO:0000305" key="2"/>
<protein>
    <recommendedName>
        <fullName>Putative aminopeptidase FrvX</fullName>
        <ecNumber>3.4.11.-</ecNumber>
    </recommendedName>
</protein>
<comment type="cofactor">
    <cofactor evidence="1">
        <name>a divalent metal cation</name>
        <dbReference type="ChEBI" id="CHEBI:60240"/>
    </cofactor>
    <text evidence="1">Binds 2 divalent metal cations per subunit.</text>
</comment>
<comment type="similarity">
    <text evidence="2">Belongs to the peptidase M42 family.</text>
</comment>
<organism>
    <name type="scientific">Escherichia coli (strain K12)</name>
    <dbReference type="NCBI Taxonomy" id="83333"/>
    <lineage>
        <taxon>Bacteria</taxon>
        <taxon>Pseudomonadati</taxon>
        <taxon>Pseudomonadota</taxon>
        <taxon>Gammaproteobacteria</taxon>
        <taxon>Enterobacterales</taxon>
        <taxon>Enterobacteriaceae</taxon>
        <taxon>Escherichia</taxon>
    </lineage>
</organism>
<gene>
    <name type="primary">frvX</name>
    <name type="synonym">yiiI</name>
    <name type="ordered locus">b3898</name>
    <name type="ordered locus">JW3869</name>
</gene>
<proteinExistence type="inferred from homology"/>
<name>FRVX_ECOLI</name>